<proteinExistence type="inferred from homology"/>
<accession>A8AK82</accession>
<sequence>MKNLISELLLRLAQKEEESKELVAQVEALEIIVTAMLRNMAQNEQQKLIHQVEDALDGVKPDASVPDYDTELLRQYVKKLLRHPRS</sequence>
<gene>
    <name evidence="1" type="primary">iraP</name>
    <name type="ordered locus">CKO_02790</name>
</gene>
<evidence type="ECO:0000255" key="1">
    <source>
        <dbReference type="HAMAP-Rule" id="MF_01198"/>
    </source>
</evidence>
<name>IRAP_CITK8</name>
<feature type="chain" id="PRO_0000337847" description="Anti-adapter protein IraP">
    <location>
        <begin position="1"/>
        <end position="86"/>
    </location>
</feature>
<feature type="coiled-coil region" evidence="1">
    <location>
        <begin position="1"/>
        <end position="36"/>
    </location>
</feature>
<reference key="1">
    <citation type="submission" date="2007-08" db="EMBL/GenBank/DDBJ databases">
        <authorList>
            <consortium name="The Citrobacter koseri Genome Sequencing Project"/>
            <person name="McClelland M."/>
            <person name="Sanderson E.K."/>
            <person name="Porwollik S."/>
            <person name="Spieth J."/>
            <person name="Clifton W.S."/>
            <person name="Latreille P."/>
            <person name="Courtney L."/>
            <person name="Wang C."/>
            <person name="Pepin K."/>
            <person name="Bhonagiri V."/>
            <person name="Nash W."/>
            <person name="Johnson M."/>
            <person name="Thiruvilangam P."/>
            <person name="Wilson R."/>
        </authorList>
    </citation>
    <scope>NUCLEOTIDE SEQUENCE [LARGE SCALE GENOMIC DNA]</scope>
    <source>
        <strain>ATCC BAA-895 / CDC 4225-83 / SGSC4696</strain>
    </source>
</reference>
<organism>
    <name type="scientific">Citrobacter koseri (strain ATCC BAA-895 / CDC 4225-83 / SGSC4696)</name>
    <dbReference type="NCBI Taxonomy" id="290338"/>
    <lineage>
        <taxon>Bacteria</taxon>
        <taxon>Pseudomonadati</taxon>
        <taxon>Pseudomonadota</taxon>
        <taxon>Gammaproteobacteria</taxon>
        <taxon>Enterobacterales</taxon>
        <taxon>Enterobacteriaceae</taxon>
        <taxon>Citrobacter</taxon>
    </lineage>
</organism>
<protein>
    <recommendedName>
        <fullName evidence="1">Anti-adapter protein IraP</fullName>
    </recommendedName>
</protein>
<keyword id="KW-0175">Coiled coil</keyword>
<keyword id="KW-0963">Cytoplasm</keyword>
<keyword id="KW-1185">Reference proteome</keyword>
<keyword id="KW-0346">Stress response</keyword>
<dbReference type="EMBL" id="CP000822">
    <property type="protein sequence ID" value="ABV13896.1"/>
    <property type="molecule type" value="Genomic_DNA"/>
</dbReference>
<dbReference type="RefSeq" id="WP_012133608.1">
    <property type="nucleotide sequence ID" value="NC_009792.1"/>
</dbReference>
<dbReference type="SMR" id="A8AK82"/>
<dbReference type="STRING" id="290338.CKO_02790"/>
<dbReference type="GeneID" id="45136634"/>
<dbReference type="KEGG" id="cko:CKO_02790"/>
<dbReference type="HOGENOM" id="CLU_169517_0_0_6"/>
<dbReference type="OrthoDB" id="6548574at2"/>
<dbReference type="Proteomes" id="UP000008148">
    <property type="component" value="Chromosome"/>
</dbReference>
<dbReference type="GO" id="GO:0005737">
    <property type="term" value="C:cytoplasm"/>
    <property type="evidence" value="ECO:0007669"/>
    <property type="project" value="UniProtKB-SubCell"/>
</dbReference>
<dbReference type="GO" id="GO:0009267">
    <property type="term" value="P:cellular response to starvation"/>
    <property type="evidence" value="ECO:0007669"/>
    <property type="project" value="UniProtKB-UniRule"/>
</dbReference>
<dbReference type="HAMAP" id="MF_01198">
    <property type="entry name" value="Anti_adapt_IraP"/>
    <property type="match status" value="1"/>
</dbReference>
<dbReference type="InterPro" id="IPR019732">
    <property type="entry name" value="SigmaS_Anti-adapt_IraP"/>
</dbReference>
<dbReference type="NCBIfam" id="NF007598">
    <property type="entry name" value="PRK10244.1"/>
    <property type="match status" value="1"/>
</dbReference>
<dbReference type="Pfam" id="PF10796">
    <property type="entry name" value="Anti-adapt_IraP"/>
    <property type="match status" value="1"/>
</dbReference>
<comment type="function">
    <text evidence="1">Inhibits RpoS proteolysis by regulating RssB activity, thereby increasing the stability of the sigma stress factor RpoS especially during phosphate starvation, but also in stationary phase and during nitrogen starvation. Its effect on RpoS stability is due to its interaction with RssB, which probably blocks the interaction of RssB with RpoS, and the consequent delivery of the RssB-RpoS complex to the ClpXP protein degradation pathway.</text>
</comment>
<comment type="subunit">
    <text evidence="1">Interacts with RssB.</text>
</comment>
<comment type="subcellular location">
    <subcellularLocation>
        <location evidence="1">Cytoplasm</location>
    </subcellularLocation>
</comment>
<comment type="similarity">
    <text evidence="1">Belongs to the IraP family.</text>
</comment>